<keyword id="KW-1003">Cell membrane</keyword>
<keyword id="KW-0472">Membrane</keyword>
<keyword id="KW-1185">Reference proteome</keyword>
<keyword id="KW-0677">Repeat</keyword>
<keyword id="KW-0762">Sugar transport</keyword>
<keyword id="KW-0812">Transmembrane</keyword>
<keyword id="KW-1133">Transmembrane helix</keyword>
<keyword id="KW-0813">Transport</keyword>
<comment type="function">
    <text evidence="1">Mediates both low-affinity uptake and efflux of sugar across the plasma membrane.</text>
</comment>
<comment type="subunit">
    <text evidence="1">Forms homooligomers and/or heterooligomers.</text>
</comment>
<comment type="subcellular location">
    <subcellularLocation>
        <location evidence="1">Cell membrane</location>
        <topology evidence="1">Multi-pass membrane protein</topology>
    </subcellularLocation>
</comment>
<comment type="similarity">
    <text evidence="3">Belongs to the SWEET sugar transporter family.</text>
</comment>
<dbReference type="EMBL" id="CM000762">
    <property type="status" value="NOT_ANNOTATED_CDS"/>
    <property type="molecule type" value="Genomic_DNA"/>
</dbReference>
<dbReference type="SMR" id="P0DKJ3"/>
<dbReference type="FunCoup" id="P0DKJ3">
    <property type="interactions" value="461"/>
</dbReference>
<dbReference type="STRING" id="4558.P0DKJ3"/>
<dbReference type="EnsemblPlants" id="KXG33819">
    <property type="protein sequence ID" value="KXG33819"/>
    <property type="gene ID" value="SORBI_3003G377700"/>
</dbReference>
<dbReference type="Gramene" id="KXG33819">
    <property type="protein sequence ID" value="KXG33819"/>
    <property type="gene ID" value="SORBI_3003G377700"/>
</dbReference>
<dbReference type="eggNOG" id="KOG1623">
    <property type="taxonomic scope" value="Eukaryota"/>
</dbReference>
<dbReference type="InParanoid" id="P0DKJ3"/>
<dbReference type="OMA" id="MEMGVAK"/>
<dbReference type="OrthoDB" id="409725at2759"/>
<dbReference type="Proteomes" id="UP000000768">
    <property type="component" value="Chromosome 3"/>
</dbReference>
<dbReference type="ExpressionAtlas" id="P0DKJ3">
    <property type="expression patterns" value="baseline and differential"/>
</dbReference>
<dbReference type="GO" id="GO:0016020">
    <property type="term" value="C:membrane"/>
    <property type="evidence" value="ECO:0000318"/>
    <property type="project" value="GO_Central"/>
</dbReference>
<dbReference type="GO" id="GO:0005886">
    <property type="term" value="C:plasma membrane"/>
    <property type="evidence" value="ECO:0007669"/>
    <property type="project" value="UniProtKB-SubCell"/>
</dbReference>
<dbReference type="GO" id="GO:0051119">
    <property type="term" value="F:sugar transmembrane transporter activity"/>
    <property type="evidence" value="ECO:0000318"/>
    <property type="project" value="GO_Central"/>
</dbReference>
<dbReference type="GO" id="GO:0008643">
    <property type="term" value="P:carbohydrate transport"/>
    <property type="evidence" value="ECO:0000318"/>
    <property type="project" value="GO_Central"/>
</dbReference>
<dbReference type="FunFam" id="1.20.1280.290:FF:000002">
    <property type="entry name" value="Bidirectional sugar transporter SWEET"/>
    <property type="match status" value="1"/>
</dbReference>
<dbReference type="FunFam" id="1.20.1280.290:FF:000014">
    <property type="entry name" value="Bidirectional sugar transporter SWEET"/>
    <property type="match status" value="1"/>
</dbReference>
<dbReference type="Gene3D" id="1.20.1280.290">
    <property type="match status" value="2"/>
</dbReference>
<dbReference type="InterPro" id="IPR047664">
    <property type="entry name" value="SWEET"/>
</dbReference>
<dbReference type="InterPro" id="IPR004316">
    <property type="entry name" value="SWEET_rpt"/>
</dbReference>
<dbReference type="PANTHER" id="PTHR10791:SF241">
    <property type="entry name" value="BIDIRECTIONAL SUGAR TRANSPORTER SWEET1A"/>
    <property type="match status" value="1"/>
</dbReference>
<dbReference type="PANTHER" id="PTHR10791">
    <property type="entry name" value="RAG1-ACTIVATING PROTEIN 1"/>
    <property type="match status" value="1"/>
</dbReference>
<dbReference type="Pfam" id="PF03083">
    <property type="entry name" value="MtN3_slv"/>
    <property type="match status" value="2"/>
</dbReference>
<organism>
    <name type="scientific">Sorghum bicolor</name>
    <name type="common">Sorghum</name>
    <name type="synonym">Sorghum vulgare</name>
    <dbReference type="NCBI Taxonomy" id="4558"/>
    <lineage>
        <taxon>Eukaryota</taxon>
        <taxon>Viridiplantae</taxon>
        <taxon>Streptophyta</taxon>
        <taxon>Embryophyta</taxon>
        <taxon>Tracheophyta</taxon>
        <taxon>Spermatophyta</taxon>
        <taxon>Magnoliopsida</taxon>
        <taxon>Liliopsida</taxon>
        <taxon>Poales</taxon>
        <taxon>Poaceae</taxon>
        <taxon>PACMAD clade</taxon>
        <taxon>Panicoideae</taxon>
        <taxon>Andropogonodae</taxon>
        <taxon>Andropogoneae</taxon>
        <taxon>Sorghinae</taxon>
        <taxon>Sorghum</taxon>
    </lineage>
</organism>
<proteinExistence type="inferred from homology"/>
<reference key="1">
    <citation type="journal article" date="2009" name="Nature">
        <title>The Sorghum bicolor genome and the diversification of grasses.</title>
        <authorList>
            <person name="Paterson A.H."/>
            <person name="Bowers J.E."/>
            <person name="Bruggmann R."/>
            <person name="Dubchak I."/>
            <person name="Grimwood J."/>
            <person name="Gundlach H."/>
            <person name="Haberer G."/>
            <person name="Hellsten U."/>
            <person name="Mitros T."/>
            <person name="Poliakov A."/>
            <person name="Schmutz J."/>
            <person name="Spannagl M."/>
            <person name="Tang H."/>
            <person name="Wang X."/>
            <person name="Wicker T."/>
            <person name="Bharti A.K."/>
            <person name="Chapman J."/>
            <person name="Feltus F.A."/>
            <person name="Gowik U."/>
            <person name="Grigoriev I.V."/>
            <person name="Lyons E."/>
            <person name="Maher C.A."/>
            <person name="Martis M."/>
            <person name="Narechania A."/>
            <person name="Otillar R.P."/>
            <person name="Penning B.W."/>
            <person name="Salamov A.A."/>
            <person name="Wang Y."/>
            <person name="Zhang L."/>
            <person name="Carpita N.C."/>
            <person name="Freeling M."/>
            <person name="Gingle A.R."/>
            <person name="Hash C.T."/>
            <person name="Keller B."/>
            <person name="Klein P."/>
            <person name="Kresovich S."/>
            <person name="McCann M.C."/>
            <person name="Ming R."/>
            <person name="Peterson D.G."/>
            <person name="Mehboob-ur-Rahman M."/>
            <person name="Ware D."/>
            <person name="Westhoff P."/>
            <person name="Mayer K.F.X."/>
            <person name="Messing J."/>
            <person name="Rokhsar D.S."/>
        </authorList>
    </citation>
    <scope>NUCLEOTIDE SEQUENCE [LARGE SCALE GENOMIC DNA]</scope>
    <source>
        <strain>cv. BTx623</strain>
    </source>
</reference>
<reference key="2">
    <citation type="journal article" date="2018" name="Plant J.">
        <title>The Sorghum bicolor reference genome: improved assembly, gene annotations, a transcriptome atlas, and signatures of genome organization.</title>
        <authorList>
            <person name="McCormick R.F."/>
            <person name="Truong S.K."/>
            <person name="Sreedasyam A."/>
            <person name="Jenkins J."/>
            <person name="Shu S."/>
            <person name="Sims D."/>
            <person name="Kennedy M."/>
            <person name="Amirebrahimi M."/>
            <person name="Weers B.D."/>
            <person name="McKinley B."/>
            <person name="Mattison A."/>
            <person name="Morishige D.T."/>
            <person name="Grimwood J."/>
            <person name="Schmutz J."/>
            <person name="Mullet J.E."/>
        </authorList>
    </citation>
    <scope>GENOME REANNOTATION</scope>
    <source>
        <strain>cv. BTx623</strain>
    </source>
</reference>
<sequence>MEHIARFFFGVSGNVIALFLFLSPVVTFWRIIRKRSTEDFSGVPYNMTLLNCLLSAWYGLPFVSPNNILVSTINGTGSVIEAIYVVIFLIFAVDRRARLRMLGLLSIVVSIFATVVLVSLLALHGNARKVFCGLAATIFSICMYASPLSIMRLVIKTKSVEYMPFLLSLAVFLCGTSWFIYGLLGRDPFIIIPNGCGSFLGLVQLILYFIYRKNKGPAVPAGKGEAAAAADVEDAKKVAAAVEMADATTTNKAAADTVVGDGKVVASQV</sequence>
<evidence type="ECO:0000250" key="1">
    <source>
        <dbReference type="UniProtKB" id="Q8L9J7"/>
    </source>
</evidence>
<evidence type="ECO:0000255" key="2"/>
<evidence type="ECO:0000305" key="3"/>
<accession>P0DKJ3</accession>
<protein>
    <recommendedName>
        <fullName evidence="3">Bidirectional sugar transporter SWEET1a</fullName>
        <shortName evidence="3">SbSWEET1a</shortName>
    </recommendedName>
</protein>
<gene>
    <name evidence="3" type="primary">SWEET1A</name>
    <name evidence="3" type="ordered locus">Sb03g041740</name>
</gene>
<name>SWT1A_SORBI</name>
<feature type="chain" id="PRO_0000434108" description="Bidirectional sugar transporter SWEET1a">
    <location>
        <begin position="1"/>
        <end position="269"/>
    </location>
</feature>
<feature type="topological domain" description="Extracellular" evidence="3">
    <location>
        <begin position="1"/>
        <end position="6"/>
    </location>
</feature>
<feature type="transmembrane region" description="Helical; Name=1" evidence="2">
    <location>
        <begin position="7"/>
        <end position="27"/>
    </location>
</feature>
<feature type="topological domain" description="Cytoplasmic" evidence="3">
    <location>
        <begin position="28"/>
        <end position="42"/>
    </location>
</feature>
<feature type="transmembrane region" description="Helical; Name=2" evidence="2">
    <location>
        <begin position="43"/>
        <end position="63"/>
    </location>
</feature>
<feature type="topological domain" description="Extracellular" evidence="3">
    <location>
        <begin position="64"/>
        <end position="72"/>
    </location>
</feature>
<feature type="transmembrane region" description="Helical; Name=3" evidence="2">
    <location>
        <begin position="73"/>
        <end position="93"/>
    </location>
</feature>
<feature type="topological domain" description="Cytoplasmic" evidence="3">
    <location>
        <begin position="94"/>
        <end position="100"/>
    </location>
</feature>
<feature type="transmembrane region" description="Helical; Name=4" evidence="2">
    <location>
        <begin position="101"/>
        <end position="121"/>
    </location>
</feature>
<feature type="topological domain" description="Extracellular" evidence="3">
    <location>
        <begin position="122"/>
        <end position="129"/>
    </location>
</feature>
<feature type="transmembrane region" description="Helical; Name=5" evidence="2">
    <location>
        <begin position="130"/>
        <end position="150"/>
    </location>
</feature>
<feature type="topological domain" description="Cytoplasmic" evidence="3">
    <location>
        <begin position="151"/>
        <end position="164"/>
    </location>
</feature>
<feature type="transmembrane region" description="Helical; Name=6" evidence="2">
    <location>
        <begin position="165"/>
        <end position="185"/>
    </location>
</feature>
<feature type="topological domain" description="Extracellular" evidence="3">
    <location>
        <begin position="186"/>
        <end position="189"/>
    </location>
</feature>
<feature type="transmembrane region" description="Helical; Name=7" evidence="2">
    <location>
        <begin position="190"/>
        <end position="210"/>
    </location>
</feature>
<feature type="topological domain" description="Cytoplasmic" evidence="3">
    <location>
        <begin position="211"/>
        <end position="269"/>
    </location>
</feature>
<feature type="domain" description="MtN3/slv 1" evidence="3">
    <location>
        <begin position="8"/>
        <end position="96"/>
    </location>
</feature>
<feature type="domain" description="MtN3/slv 2" evidence="3">
    <location>
        <begin position="132"/>
        <end position="215"/>
    </location>
</feature>